<comment type="function">
    <text evidence="1">Catalyzes the base-exchange of a guanine (G) residue with the queuine precursor 7-aminomethyl-7-deazaguanine (PreQ1) at position 34 (anticodon wobble position) in tRNAs with GU(N) anticodons (tRNA-Asp, -Asn, -His and -Tyr). Catalysis occurs through a double-displacement mechanism. The nucleophile active site attacks the C1' of nucleotide 34 to detach the guanine base from the RNA, forming a covalent enzyme-RNA intermediate. The proton acceptor active site deprotonates the incoming PreQ1, allowing a nucleophilic attack on the C1' of the ribose to form the product. After dissociation, two additional enzymatic reactions on the tRNA convert PreQ1 to queuine (Q), resulting in the hypermodified nucleoside queuosine (7-(((4,5-cis-dihydroxy-2-cyclopenten-1-yl)amino)methyl)-7-deazaguanosine).</text>
</comment>
<comment type="catalytic activity">
    <reaction evidence="1">
        <text>7-aminomethyl-7-carbaguanine + guanosine(34) in tRNA = 7-aminomethyl-7-carbaguanosine(34) in tRNA + guanine</text>
        <dbReference type="Rhea" id="RHEA:24104"/>
        <dbReference type="Rhea" id="RHEA-COMP:10341"/>
        <dbReference type="Rhea" id="RHEA-COMP:10342"/>
        <dbReference type="ChEBI" id="CHEBI:16235"/>
        <dbReference type="ChEBI" id="CHEBI:58703"/>
        <dbReference type="ChEBI" id="CHEBI:74269"/>
        <dbReference type="ChEBI" id="CHEBI:82833"/>
        <dbReference type="EC" id="2.4.2.29"/>
    </reaction>
</comment>
<comment type="cofactor">
    <cofactor evidence="1">
        <name>Zn(2+)</name>
        <dbReference type="ChEBI" id="CHEBI:29105"/>
    </cofactor>
    <text evidence="1">Binds 1 zinc ion per subunit.</text>
</comment>
<comment type="pathway">
    <text evidence="1">tRNA modification; tRNA-queuosine biosynthesis.</text>
</comment>
<comment type="subunit">
    <text evidence="1">Homodimer. Within each dimer, one monomer is responsible for RNA recognition and catalysis, while the other monomer binds to the replacement base PreQ1.</text>
</comment>
<comment type="similarity">
    <text evidence="1">Belongs to the queuine tRNA-ribosyltransferase family.</text>
</comment>
<evidence type="ECO:0000255" key="1">
    <source>
        <dbReference type="HAMAP-Rule" id="MF_00168"/>
    </source>
</evidence>
<accession>Q03ER2</accession>
<dbReference type="EC" id="2.4.2.29" evidence="1"/>
<dbReference type="EMBL" id="CP000422">
    <property type="protein sequence ID" value="ABJ68310.1"/>
    <property type="molecule type" value="Genomic_DNA"/>
</dbReference>
<dbReference type="RefSeq" id="WP_011673581.1">
    <property type="nucleotide sequence ID" value="NC_008525.1"/>
</dbReference>
<dbReference type="SMR" id="Q03ER2"/>
<dbReference type="STRING" id="278197.PEPE_1269"/>
<dbReference type="GeneID" id="33061721"/>
<dbReference type="KEGG" id="ppe:PEPE_1269"/>
<dbReference type="eggNOG" id="COG0343">
    <property type="taxonomic scope" value="Bacteria"/>
</dbReference>
<dbReference type="HOGENOM" id="CLU_022060_0_1_9"/>
<dbReference type="OrthoDB" id="9805417at2"/>
<dbReference type="UniPathway" id="UPA00392"/>
<dbReference type="Proteomes" id="UP000000773">
    <property type="component" value="Chromosome"/>
</dbReference>
<dbReference type="GO" id="GO:0005829">
    <property type="term" value="C:cytosol"/>
    <property type="evidence" value="ECO:0007669"/>
    <property type="project" value="TreeGrafter"/>
</dbReference>
<dbReference type="GO" id="GO:0046872">
    <property type="term" value="F:metal ion binding"/>
    <property type="evidence" value="ECO:0007669"/>
    <property type="project" value="UniProtKB-KW"/>
</dbReference>
<dbReference type="GO" id="GO:0008479">
    <property type="term" value="F:tRNA-guanosine(34) queuine transglycosylase activity"/>
    <property type="evidence" value="ECO:0007669"/>
    <property type="project" value="UniProtKB-UniRule"/>
</dbReference>
<dbReference type="GO" id="GO:0008616">
    <property type="term" value="P:queuosine biosynthetic process"/>
    <property type="evidence" value="ECO:0007669"/>
    <property type="project" value="UniProtKB-UniRule"/>
</dbReference>
<dbReference type="GO" id="GO:0002099">
    <property type="term" value="P:tRNA wobble guanine modification"/>
    <property type="evidence" value="ECO:0007669"/>
    <property type="project" value="TreeGrafter"/>
</dbReference>
<dbReference type="GO" id="GO:0101030">
    <property type="term" value="P:tRNA-guanine transglycosylation"/>
    <property type="evidence" value="ECO:0007669"/>
    <property type="project" value="InterPro"/>
</dbReference>
<dbReference type="FunFam" id="3.20.20.105:FF:000001">
    <property type="entry name" value="Queuine tRNA-ribosyltransferase"/>
    <property type="match status" value="1"/>
</dbReference>
<dbReference type="Gene3D" id="3.20.20.105">
    <property type="entry name" value="Queuine tRNA-ribosyltransferase-like"/>
    <property type="match status" value="1"/>
</dbReference>
<dbReference type="HAMAP" id="MF_00168">
    <property type="entry name" value="Q_tRNA_Tgt"/>
    <property type="match status" value="1"/>
</dbReference>
<dbReference type="InterPro" id="IPR050076">
    <property type="entry name" value="ArchSynthase1/Queuine_TRR"/>
</dbReference>
<dbReference type="InterPro" id="IPR004803">
    <property type="entry name" value="TGT"/>
</dbReference>
<dbReference type="InterPro" id="IPR036511">
    <property type="entry name" value="TGT-like_sf"/>
</dbReference>
<dbReference type="InterPro" id="IPR002616">
    <property type="entry name" value="tRNA_ribo_trans-like"/>
</dbReference>
<dbReference type="NCBIfam" id="TIGR00430">
    <property type="entry name" value="Q_tRNA_tgt"/>
    <property type="match status" value="1"/>
</dbReference>
<dbReference type="NCBIfam" id="TIGR00449">
    <property type="entry name" value="tgt_general"/>
    <property type="match status" value="1"/>
</dbReference>
<dbReference type="PANTHER" id="PTHR46499">
    <property type="entry name" value="QUEUINE TRNA-RIBOSYLTRANSFERASE"/>
    <property type="match status" value="1"/>
</dbReference>
<dbReference type="PANTHER" id="PTHR46499:SF1">
    <property type="entry name" value="QUEUINE TRNA-RIBOSYLTRANSFERASE"/>
    <property type="match status" value="1"/>
</dbReference>
<dbReference type="Pfam" id="PF01702">
    <property type="entry name" value="TGT"/>
    <property type="match status" value="1"/>
</dbReference>
<dbReference type="SUPFAM" id="SSF51713">
    <property type="entry name" value="tRNA-guanine transglycosylase"/>
    <property type="match status" value="1"/>
</dbReference>
<protein>
    <recommendedName>
        <fullName evidence="1">Queuine tRNA-ribosyltransferase</fullName>
        <ecNumber evidence="1">2.4.2.29</ecNumber>
    </recommendedName>
    <alternativeName>
        <fullName evidence="1">Guanine insertion enzyme</fullName>
    </alternativeName>
    <alternativeName>
        <fullName evidence="1">tRNA-guanine transglycosylase</fullName>
    </alternativeName>
</protein>
<keyword id="KW-0328">Glycosyltransferase</keyword>
<keyword id="KW-0479">Metal-binding</keyword>
<keyword id="KW-0671">Queuosine biosynthesis</keyword>
<keyword id="KW-0808">Transferase</keyword>
<keyword id="KW-0819">tRNA processing</keyword>
<keyword id="KW-0862">Zinc</keyword>
<reference key="1">
    <citation type="journal article" date="2006" name="Proc. Natl. Acad. Sci. U.S.A.">
        <title>Comparative genomics of the lactic acid bacteria.</title>
        <authorList>
            <person name="Makarova K.S."/>
            <person name="Slesarev A."/>
            <person name="Wolf Y.I."/>
            <person name="Sorokin A."/>
            <person name="Mirkin B."/>
            <person name="Koonin E.V."/>
            <person name="Pavlov A."/>
            <person name="Pavlova N."/>
            <person name="Karamychev V."/>
            <person name="Polouchine N."/>
            <person name="Shakhova V."/>
            <person name="Grigoriev I."/>
            <person name="Lou Y."/>
            <person name="Rohksar D."/>
            <person name="Lucas S."/>
            <person name="Huang K."/>
            <person name="Goodstein D.M."/>
            <person name="Hawkins T."/>
            <person name="Plengvidhya V."/>
            <person name="Welker D."/>
            <person name="Hughes J."/>
            <person name="Goh Y."/>
            <person name="Benson A."/>
            <person name="Baldwin K."/>
            <person name="Lee J.-H."/>
            <person name="Diaz-Muniz I."/>
            <person name="Dosti B."/>
            <person name="Smeianov V."/>
            <person name="Wechter W."/>
            <person name="Barabote R."/>
            <person name="Lorca G."/>
            <person name="Altermann E."/>
            <person name="Barrangou R."/>
            <person name="Ganesan B."/>
            <person name="Xie Y."/>
            <person name="Rawsthorne H."/>
            <person name="Tamir D."/>
            <person name="Parker C."/>
            <person name="Breidt F."/>
            <person name="Broadbent J.R."/>
            <person name="Hutkins R."/>
            <person name="O'Sullivan D."/>
            <person name="Steele J."/>
            <person name="Unlu G."/>
            <person name="Saier M.H. Jr."/>
            <person name="Klaenhammer T."/>
            <person name="Richardson P."/>
            <person name="Kozyavkin S."/>
            <person name="Weimer B.C."/>
            <person name="Mills D.A."/>
        </authorList>
    </citation>
    <scope>NUCLEOTIDE SEQUENCE [LARGE SCALE GENOMIC DNA]</scope>
    <source>
        <strain>ATCC 25745 / CCUG 21536 / LMG 10740 / 183-1w</strain>
    </source>
</reference>
<sequence length="380" mass="43206">MEPAIKYRLIKTDKHTGARLGEIITPHGTFPTPIFMPVGTQATVKAMSPEELEDLGADIILSNTYHLWVRPGEDIVKEGGGLHQFMNWKKGILTDSGGFQVFSLAKLRDITEEGVHFKNELNGANMFLSPEKAIQIENDLGPDIMMSFDECPPYFESYDYVKHSVERTSRWAERGLKAHRNPETQGLFGIIQGAGFEDLRRQSAKDLVSMDFPGYSIGGLSVGESKEEMNRVLDFTTQLIPENKPRYLMGVGSPDALIDGVLRGVDMFDCVLPTRIARNGTCMTSHGRLVVKNAKYARDFTPIDDNCQCYTCRNYTRAYIRHLIKTDETFGLRLTSIHNVYFLVHLMKDVRQAIMDDNLLEFRQNFFEEYGYNKENSKNF</sequence>
<name>TGT_PEDPA</name>
<gene>
    <name evidence="1" type="primary">tgt</name>
    <name type="ordered locus">PEPE_1269</name>
</gene>
<proteinExistence type="inferred from homology"/>
<organism>
    <name type="scientific">Pediococcus pentosaceus (strain ATCC 25745 / CCUG 21536 / LMG 10740 / 183-1w)</name>
    <dbReference type="NCBI Taxonomy" id="278197"/>
    <lineage>
        <taxon>Bacteria</taxon>
        <taxon>Bacillati</taxon>
        <taxon>Bacillota</taxon>
        <taxon>Bacilli</taxon>
        <taxon>Lactobacillales</taxon>
        <taxon>Lactobacillaceae</taxon>
        <taxon>Pediococcus</taxon>
    </lineage>
</organism>
<feature type="chain" id="PRO_1000016821" description="Queuine tRNA-ribosyltransferase">
    <location>
        <begin position="1"/>
        <end position="380"/>
    </location>
</feature>
<feature type="region of interest" description="RNA binding" evidence="1">
    <location>
        <begin position="250"/>
        <end position="256"/>
    </location>
</feature>
<feature type="region of interest" description="RNA binding; important for wobble base 34 recognition" evidence="1">
    <location>
        <begin position="274"/>
        <end position="278"/>
    </location>
</feature>
<feature type="active site" description="Proton acceptor" evidence="1">
    <location>
        <position position="95"/>
    </location>
</feature>
<feature type="active site" description="Nucleophile" evidence="1">
    <location>
        <position position="269"/>
    </location>
</feature>
<feature type="binding site" evidence="1">
    <location>
        <begin position="95"/>
        <end position="99"/>
    </location>
    <ligand>
        <name>substrate</name>
    </ligand>
</feature>
<feature type="binding site" evidence="1">
    <location>
        <position position="149"/>
    </location>
    <ligand>
        <name>substrate</name>
    </ligand>
</feature>
<feature type="binding site" evidence="1">
    <location>
        <position position="192"/>
    </location>
    <ligand>
        <name>substrate</name>
    </ligand>
</feature>
<feature type="binding site" evidence="1">
    <location>
        <position position="219"/>
    </location>
    <ligand>
        <name>substrate</name>
    </ligand>
</feature>
<feature type="binding site" evidence="1">
    <location>
        <position position="307"/>
    </location>
    <ligand>
        <name>Zn(2+)</name>
        <dbReference type="ChEBI" id="CHEBI:29105"/>
    </ligand>
</feature>
<feature type="binding site" evidence="1">
    <location>
        <position position="309"/>
    </location>
    <ligand>
        <name>Zn(2+)</name>
        <dbReference type="ChEBI" id="CHEBI:29105"/>
    </ligand>
</feature>
<feature type="binding site" evidence="1">
    <location>
        <position position="312"/>
    </location>
    <ligand>
        <name>Zn(2+)</name>
        <dbReference type="ChEBI" id="CHEBI:29105"/>
    </ligand>
</feature>
<feature type="binding site" evidence="1">
    <location>
        <position position="338"/>
    </location>
    <ligand>
        <name>Zn(2+)</name>
        <dbReference type="ChEBI" id="CHEBI:29105"/>
    </ligand>
</feature>